<name>KCY_SALPK</name>
<feature type="chain" id="PRO_1000100685" description="Cytidylate kinase">
    <location>
        <begin position="1"/>
        <end position="227"/>
    </location>
</feature>
<feature type="binding site" evidence="1">
    <location>
        <begin position="12"/>
        <end position="20"/>
    </location>
    <ligand>
        <name>ATP</name>
        <dbReference type="ChEBI" id="CHEBI:30616"/>
    </ligand>
</feature>
<evidence type="ECO:0000255" key="1">
    <source>
        <dbReference type="HAMAP-Rule" id="MF_00238"/>
    </source>
</evidence>
<organism>
    <name type="scientific">Salmonella paratyphi A (strain AKU_12601)</name>
    <dbReference type="NCBI Taxonomy" id="554290"/>
    <lineage>
        <taxon>Bacteria</taxon>
        <taxon>Pseudomonadati</taxon>
        <taxon>Pseudomonadota</taxon>
        <taxon>Gammaproteobacteria</taxon>
        <taxon>Enterobacterales</taxon>
        <taxon>Enterobacteriaceae</taxon>
        <taxon>Salmonella</taxon>
    </lineage>
</organism>
<accession>B5BBP7</accession>
<keyword id="KW-0067">ATP-binding</keyword>
<keyword id="KW-0963">Cytoplasm</keyword>
<keyword id="KW-0418">Kinase</keyword>
<keyword id="KW-0547">Nucleotide-binding</keyword>
<keyword id="KW-0808">Transferase</keyword>
<protein>
    <recommendedName>
        <fullName evidence="1">Cytidylate kinase</fullName>
        <shortName evidence="1">CK</shortName>
        <ecNumber evidence="1">2.7.4.25</ecNumber>
    </recommendedName>
    <alternativeName>
        <fullName evidence="1">Cytidine monophosphate kinase</fullName>
        <shortName evidence="1">CMP kinase</shortName>
    </alternativeName>
</protein>
<dbReference type="EC" id="2.7.4.25" evidence="1"/>
<dbReference type="EMBL" id="FM200053">
    <property type="protein sequence ID" value="CAR59883.1"/>
    <property type="molecule type" value="Genomic_DNA"/>
</dbReference>
<dbReference type="RefSeq" id="WP_000125004.1">
    <property type="nucleotide sequence ID" value="NC_011147.1"/>
</dbReference>
<dbReference type="SMR" id="B5BBP7"/>
<dbReference type="KEGG" id="sek:SSPA1690"/>
<dbReference type="HOGENOM" id="CLU_079959_0_2_6"/>
<dbReference type="Proteomes" id="UP000001869">
    <property type="component" value="Chromosome"/>
</dbReference>
<dbReference type="GO" id="GO:0005829">
    <property type="term" value="C:cytosol"/>
    <property type="evidence" value="ECO:0007669"/>
    <property type="project" value="TreeGrafter"/>
</dbReference>
<dbReference type="GO" id="GO:0005524">
    <property type="term" value="F:ATP binding"/>
    <property type="evidence" value="ECO:0007669"/>
    <property type="project" value="UniProtKB-UniRule"/>
</dbReference>
<dbReference type="GO" id="GO:0036430">
    <property type="term" value="F:CMP kinase activity"/>
    <property type="evidence" value="ECO:0007669"/>
    <property type="project" value="RHEA"/>
</dbReference>
<dbReference type="GO" id="GO:0036431">
    <property type="term" value="F:dCMP kinase activity"/>
    <property type="evidence" value="ECO:0007669"/>
    <property type="project" value="RHEA"/>
</dbReference>
<dbReference type="GO" id="GO:0015949">
    <property type="term" value="P:nucleobase-containing small molecule interconversion"/>
    <property type="evidence" value="ECO:0007669"/>
    <property type="project" value="TreeGrafter"/>
</dbReference>
<dbReference type="GO" id="GO:0006220">
    <property type="term" value="P:pyrimidine nucleotide metabolic process"/>
    <property type="evidence" value="ECO:0007669"/>
    <property type="project" value="UniProtKB-UniRule"/>
</dbReference>
<dbReference type="CDD" id="cd02020">
    <property type="entry name" value="CMPK"/>
    <property type="match status" value="1"/>
</dbReference>
<dbReference type="FunFam" id="3.40.50.300:FF:000262">
    <property type="entry name" value="Cytidylate kinase"/>
    <property type="match status" value="1"/>
</dbReference>
<dbReference type="Gene3D" id="3.40.50.300">
    <property type="entry name" value="P-loop containing nucleotide triphosphate hydrolases"/>
    <property type="match status" value="1"/>
</dbReference>
<dbReference type="HAMAP" id="MF_00238">
    <property type="entry name" value="Cytidyl_kinase_type1"/>
    <property type="match status" value="1"/>
</dbReference>
<dbReference type="InterPro" id="IPR003136">
    <property type="entry name" value="Cytidylate_kin"/>
</dbReference>
<dbReference type="InterPro" id="IPR011994">
    <property type="entry name" value="Cytidylate_kinase_dom"/>
</dbReference>
<dbReference type="InterPro" id="IPR027417">
    <property type="entry name" value="P-loop_NTPase"/>
</dbReference>
<dbReference type="NCBIfam" id="TIGR00017">
    <property type="entry name" value="cmk"/>
    <property type="match status" value="1"/>
</dbReference>
<dbReference type="PANTHER" id="PTHR21299:SF2">
    <property type="entry name" value="CYTIDYLATE KINASE"/>
    <property type="match status" value="1"/>
</dbReference>
<dbReference type="PANTHER" id="PTHR21299">
    <property type="entry name" value="CYTIDYLATE KINASE/PANTOATE-BETA-ALANINE LIGASE"/>
    <property type="match status" value="1"/>
</dbReference>
<dbReference type="Pfam" id="PF02224">
    <property type="entry name" value="Cytidylate_kin"/>
    <property type="match status" value="1"/>
</dbReference>
<dbReference type="SUPFAM" id="SSF52540">
    <property type="entry name" value="P-loop containing nucleoside triphosphate hydrolases"/>
    <property type="match status" value="1"/>
</dbReference>
<proteinExistence type="inferred from homology"/>
<gene>
    <name evidence="1" type="primary">cmk</name>
    <name type="ordered locus">SSPA1690</name>
</gene>
<sequence length="227" mass="24741">MTAIAPVITIDGPSGAGKGTLCKAMAEALQWHLLDSGAIYRVLALAALHHHVDLASEDALVPLASHLDVRFVSTDGNLEVILEGEDVSGEIRTQEVANAASQVAAFPRVREALLRRQRAFREAPGLIADGRDMGTVVFPDAPVKIFLDASSEERAHRRMLQLQENGFSVNFEHLLAEIKERDDRDRNRAVAPLVPAADALVLDSTRLSIEQVIEKALQYARQKLALA</sequence>
<comment type="catalytic activity">
    <reaction evidence="1">
        <text>CMP + ATP = CDP + ADP</text>
        <dbReference type="Rhea" id="RHEA:11600"/>
        <dbReference type="ChEBI" id="CHEBI:30616"/>
        <dbReference type="ChEBI" id="CHEBI:58069"/>
        <dbReference type="ChEBI" id="CHEBI:60377"/>
        <dbReference type="ChEBI" id="CHEBI:456216"/>
        <dbReference type="EC" id="2.7.4.25"/>
    </reaction>
</comment>
<comment type="catalytic activity">
    <reaction evidence="1">
        <text>dCMP + ATP = dCDP + ADP</text>
        <dbReference type="Rhea" id="RHEA:25094"/>
        <dbReference type="ChEBI" id="CHEBI:30616"/>
        <dbReference type="ChEBI" id="CHEBI:57566"/>
        <dbReference type="ChEBI" id="CHEBI:58593"/>
        <dbReference type="ChEBI" id="CHEBI:456216"/>
        <dbReference type="EC" id="2.7.4.25"/>
    </reaction>
</comment>
<comment type="subcellular location">
    <subcellularLocation>
        <location evidence="1">Cytoplasm</location>
    </subcellularLocation>
</comment>
<comment type="similarity">
    <text evidence="1">Belongs to the cytidylate kinase family. Type 1 subfamily.</text>
</comment>
<reference key="1">
    <citation type="journal article" date="2009" name="BMC Genomics">
        <title>Pseudogene accumulation in the evolutionary histories of Salmonella enterica serovars Paratyphi A and Typhi.</title>
        <authorList>
            <person name="Holt K.E."/>
            <person name="Thomson N.R."/>
            <person name="Wain J."/>
            <person name="Langridge G.C."/>
            <person name="Hasan R."/>
            <person name="Bhutta Z.A."/>
            <person name="Quail M.A."/>
            <person name="Norbertczak H."/>
            <person name="Walker D."/>
            <person name="Simmonds M."/>
            <person name="White B."/>
            <person name="Bason N."/>
            <person name="Mungall K."/>
            <person name="Dougan G."/>
            <person name="Parkhill J."/>
        </authorList>
    </citation>
    <scope>NUCLEOTIDE SEQUENCE [LARGE SCALE GENOMIC DNA]</scope>
    <source>
        <strain>AKU_12601</strain>
    </source>
</reference>